<gene>
    <name type="primary">JIP5</name>
    <name type="ORF">SNOG_00128</name>
</gene>
<reference key="1">
    <citation type="journal article" date="2007" name="Plant Cell">
        <title>Dothideomycete-plant interactions illuminated by genome sequencing and EST analysis of the wheat pathogen Stagonospora nodorum.</title>
        <authorList>
            <person name="Hane J.K."/>
            <person name="Lowe R.G.T."/>
            <person name="Solomon P.S."/>
            <person name="Tan K.-C."/>
            <person name="Schoch C.L."/>
            <person name="Spatafora J.W."/>
            <person name="Crous P.W."/>
            <person name="Kodira C.D."/>
            <person name="Birren B.W."/>
            <person name="Galagan J.E."/>
            <person name="Torriani S.F.F."/>
            <person name="McDonald B.A."/>
            <person name="Oliver R.P."/>
        </authorList>
    </citation>
    <scope>NUCLEOTIDE SEQUENCE [LARGE SCALE GENOMIC DNA]</scope>
    <source>
        <strain>SN15 / ATCC MYA-4574 / FGSC 10173</strain>
    </source>
</reference>
<name>JIP5_PHANO</name>
<feature type="chain" id="PRO_0000333567" description="WD repeat-containing protein JIP5">
    <location>
        <begin position="1"/>
        <end position="425"/>
    </location>
</feature>
<feature type="repeat" description="WD 1">
    <location>
        <begin position="9"/>
        <end position="48"/>
    </location>
</feature>
<feature type="repeat" description="WD 2">
    <location>
        <begin position="71"/>
        <end position="110"/>
    </location>
</feature>
<feature type="repeat" description="WD 3">
    <location>
        <begin position="117"/>
        <end position="158"/>
    </location>
</feature>
<feature type="repeat" description="WD 4">
    <location>
        <begin position="219"/>
        <end position="262"/>
    </location>
</feature>
<feature type="repeat" description="WD 5">
    <location>
        <begin position="321"/>
        <end position="358"/>
    </location>
</feature>
<feature type="region of interest" description="Disordered" evidence="2">
    <location>
        <begin position="354"/>
        <end position="425"/>
    </location>
</feature>
<feature type="compositionally biased region" description="Acidic residues" evidence="2">
    <location>
        <begin position="356"/>
        <end position="368"/>
    </location>
</feature>
<feature type="compositionally biased region" description="Acidic residues" evidence="2">
    <location>
        <begin position="378"/>
        <end position="396"/>
    </location>
</feature>
<feature type="compositionally biased region" description="Basic residues" evidence="2">
    <location>
        <begin position="399"/>
        <end position="414"/>
    </location>
</feature>
<dbReference type="EMBL" id="CH445325">
    <property type="protein sequence ID" value="EAT91623.1"/>
    <property type="molecule type" value="Genomic_DNA"/>
</dbReference>
<dbReference type="RefSeq" id="XP_001790823.1">
    <property type="nucleotide sequence ID" value="XM_001790771.1"/>
</dbReference>
<dbReference type="SMR" id="Q0V786"/>
<dbReference type="FunCoup" id="Q0V786">
    <property type="interactions" value="93"/>
</dbReference>
<dbReference type="STRING" id="321614.Q0V786"/>
<dbReference type="EnsemblFungi" id="SNOT_00128">
    <property type="protein sequence ID" value="SNOT_00128"/>
    <property type="gene ID" value="SNOG_00128"/>
</dbReference>
<dbReference type="GeneID" id="5967551"/>
<dbReference type="KEGG" id="pno:SNOG_00128"/>
<dbReference type="VEuPathDB" id="FungiDB:JI435_001280"/>
<dbReference type="eggNOG" id="KOG2444">
    <property type="taxonomic scope" value="Eukaryota"/>
</dbReference>
<dbReference type="HOGENOM" id="CLU_052691_0_0_1"/>
<dbReference type="InParanoid" id="Q0V786"/>
<dbReference type="OMA" id="QAIHPTE"/>
<dbReference type="OrthoDB" id="2288928at2759"/>
<dbReference type="Proteomes" id="UP000001055">
    <property type="component" value="Unassembled WGS sequence"/>
</dbReference>
<dbReference type="GO" id="GO:0005730">
    <property type="term" value="C:nucleolus"/>
    <property type="evidence" value="ECO:0007669"/>
    <property type="project" value="UniProtKB-SubCell"/>
</dbReference>
<dbReference type="Gene3D" id="2.130.10.10">
    <property type="entry name" value="YVTN repeat-like/Quinoprotein amine dehydrogenase"/>
    <property type="match status" value="1"/>
</dbReference>
<dbReference type="InterPro" id="IPR015943">
    <property type="entry name" value="WD40/YVTN_repeat-like_dom_sf"/>
</dbReference>
<dbReference type="InterPro" id="IPR036322">
    <property type="entry name" value="WD40_repeat_dom_sf"/>
</dbReference>
<dbReference type="InterPro" id="IPR001680">
    <property type="entry name" value="WD40_rpt"/>
</dbReference>
<dbReference type="InterPro" id="IPR050505">
    <property type="entry name" value="WDR55_POC1"/>
</dbReference>
<dbReference type="PANTHER" id="PTHR44019">
    <property type="entry name" value="WD REPEAT-CONTAINING PROTEIN 55"/>
    <property type="match status" value="1"/>
</dbReference>
<dbReference type="PANTHER" id="PTHR44019:SF20">
    <property type="entry name" value="WD REPEAT-CONTAINING PROTEIN 55"/>
    <property type="match status" value="1"/>
</dbReference>
<dbReference type="Pfam" id="PF00400">
    <property type="entry name" value="WD40"/>
    <property type="match status" value="1"/>
</dbReference>
<dbReference type="SMART" id="SM00320">
    <property type="entry name" value="WD40"/>
    <property type="match status" value="3"/>
</dbReference>
<dbReference type="SUPFAM" id="SSF50978">
    <property type="entry name" value="WD40 repeat-like"/>
    <property type="match status" value="1"/>
</dbReference>
<dbReference type="PROSITE" id="PS50082">
    <property type="entry name" value="WD_REPEATS_2"/>
    <property type="match status" value="1"/>
</dbReference>
<dbReference type="PROSITE" id="PS50294">
    <property type="entry name" value="WD_REPEATS_REGION"/>
    <property type="match status" value="1"/>
</dbReference>
<organism>
    <name type="scientific">Phaeosphaeria nodorum (strain SN15 / ATCC MYA-4574 / FGSC 10173)</name>
    <name type="common">Glume blotch fungus</name>
    <name type="synonym">Parastagonospora nodorum</name>
    <dbReference type="NCBI Taxonomy" id="321614"/>
    <lineage>
        <taxon>Eukaryota</taxon>
        <taxon>Fungi</taxon>
        <taxon>Dikarya</taxon>
        <taxon>Ascomycota</taxon>
        <taxon>Pezizomycotina</taxon>
        <taxon>Dothideomycetes</taxon>
        <taxon>Pleosporomycetidae</taxon>
        <taxon>Pleosporales</taxon>
        <taxon>Pleosporineae</taxon>
        <taxon>Phaeosphaeriaceae</taxon>
        <taxon>Parastagonospora</taxon>
    </lineage>
</organism>
<proteinExistence type="inferred from homology"/>
<comment type="subcellular location">
    <subcellularLocation>
        <location evidence="1">Nucleus</location>
        <location evidence="1">Nucleolus</location>
    </subcellularLocation>
</comment>
<comment type="similarity">
    <text evidence="3">Belongs to the WD repeat WDR55 family.</text>
</comment>
<evidence type="ECO:0000250" key="1"/>
<evidence type="ECO:0000256" key="2">
    <source>
        <dbReference type="SAM" id="MobiDB-lite"/>
    </source>
</evidence>
<evidence type="ECO:0000305" key="3"/>
<protein>
    <recommendedName>
        <fullName>WD repeat-containing protein JIP5</fullName>
    </recommendedName>
</protein>
<accession>Q0V786</accession>
<keyword id="KW-0539">Nucleus</keyword>
<keyword id="KW-0677">Repeat</keyword>
<keyword id="KW-0853">WD repeat</keyword>
<sequence>MFENLCALQLDSDLFAQAIHPEEPIVAVGLASGHVQTYRLPPGASDDSDPDEALAAEKGFGHIATTWKTRRHKGSCRTLAFSVDGSSLYSAGTDGIVKVADTTTGRVTAKFAVPLDLANGGIDAPTLVHALSPQSLILGTDSSALHIYDIRDQGAKSAFKPQATHRPHDDYVSSLTPLPPTEASTSGFSKQWVTTGGSTLAVTDLRRGVMVRSEDQEEELLSSVMVTGLSKKGTSVGEKVLVGGGNGVLTLWERGVWDDQDERITIDRSKGGGESLDVIALLPDGVGPGGKIAAVGLGDGSLRFVKLGPNKIIDELKHDELRQEGVIGLGFDVTGRMVSGGGKKLNIWGEKTWQDVPEDDEDEQEEEAPANGKREHESDEDEDSDEDMEESSEDDEPKQKRKKRRKGKGGKQAKGHGILHFSGLA</sequence>